<comment type="function">
    <text evidence="1">Catalyzes the reversible conversion of 2-phosphoglycerate (2-PG) into phosphoenolpyruvate (PEP). It is essential for the degradation of carbohydrates via glycolysis.</text>
</comment>
<comment type="catalytic activity">
    <reaction evidence="1">
        <text>(2R)-2-phosphoglycerate = phosphoenolpyruvate + H2O</text>
        <dbReference type="Rhea" id="RHEA:10164"/>
        <dbReference type="ChEBI" id="CHEBI:15377"/>
        <dbReference type="ChEBI" id="CHEBI:58289"/>
        <dbReference type="ChEBI" id="CHEBI:58702"/>
        <dbReference type="EC" id="4.2.1.11"/>
    </reaction>
</comment>
<comment type="cofactor">
    <cofactor evidence="1">
        <name>Mg(2+)</name>
        <dbReference type="ChEBI" id="CHEBI:18420"/>
    </cofactor>
    <text evidence="1">Binds a second Mg(2+) ion via substrate during catalysis.</text>
</comment>
<comment type="pathway">
    <text evidence="1">Carbohydrate degradation; glycolysis; pyruvate from D-glyceraldehyde 3-phosphate: step 4/5.</text>
</comment>
<comment type="subcellular location">
    <subcellularLocation>
        <location evidence="1">Cytoplasm</location>
    </subcellularLocation>
    <subcellularLocation>
        <location evidence="1">Secreted</location>
    </subcellularLocation>
    <subcellularLocation>
        <location evidence="1">Cell surface</location>
    </subcellularLocation>
    <text evidence="1">Fractions of enolase are present in both the cytoplasm and on the cell surface.</text>
</comment>
<comment type="similarity">
    <text evidence="1">Belongs to the enolase family.</text>
</comment>
<dbReference type="EC" id="4.2.1.11" evidence="1"/>
<dbReference type="EMBL" id="CP000001">
    <property type="protein sequence ID" value="AAU15453.1"/>
    <property type="molecule type" value="Genomic_DNA"/>
</dbReference>
<dbReference type="RefSeq" id="WP_000103950.1">
    <property type="nucleotide sequence ID" value="NZ_CP009968.1"/>
</dbReference>
<dbReference type="SMR" id="Q631M2"/>
<dbReference type="KEGG" id="bcz:BCE33L4824"/>
<dbReference type="PATRIC" id="fig|288681.22.peg.529"/>
<dbReference type="UniPathway" id="UPA00109">
    <property type="reaction ID" value="UER00187"/>
</dbReference>
<dbReference type="Proteomes" id="UP000002612">
    <property type="component" value="Chromosome"/>
</dbReference>
<dbReference type="GO" id="GO:0009986">
    <property type="term" value="C:cell surface"/>
    <property type="evidence" value="ECO:0007669"/>
    <property type="project" value="UniProtKB-SubCell"/>
</dbReference>
<dbReference type="GO" id="GO:0005576">
    <property type="term" value="C:extracellular region"/>
    <property type="evidence" value="ECO:0007669"/>
    <property type="project" value="UniProtKB-SubCell"/>
</dbReference>
<dbReference type="GO" id="GO:0000015">
    <property type="term" value="C:phosphopyruvate hydratase complex"/>
    <property type="evidence" value="ECO:0007669"/>
    <property type="project" value="InterPro"/>
</dbReference>
<dbReference type="GO" id="GO:0000287">
    <property type="term" value="F:magnesium ion binding"/>
    <property type="evidence" value="ECO:0007669"/>
    <property type="project" value="UniProtKB-UniRule"/>
</dbReference>
<dbReference type="GO" id="GO:0004634">
    <property type="term" value="F:phosphopyruvate hydratase activity"/>
    <property type="evidence" value="ECO:0007669"/>
    <property type="project" value="UniProtKB-UniRule"/>
</dbReference>
<dbReference type="GO" id="GO:0006096">
    <property type="term" value="P:glycolytic process"/>
    <property type="evidence" value="ECO:0007669"/>
    <property type="project" value="UniProtKB-UniRule"/>
</dbReference>
<dbReference type="CDD" id="cd03313">
    <property type="entry name" value="enolase"/>
    <property type="match status" value="1"/>
</dbReference>
<dbReference type="FunFam" id="3.20.20.120:FF:000001">
    <property type="entry name" value="Enolase"/>
    <property type="match status" value="1"/>
</dbReference>
<dbReference type="FunFam" id="3.30.390.10:FF:000001">
    <property type="entry name" value="Enolase"/>
    <property type="match status" value="1"/>
</dbReference>
<dbReference type="Gene3D" id="3.20.20.120">
    <property type="entry name" value="Enolase-like C-terminal domain"/>
    <property type="match status" value="1"/>
</dbReference>
<dbReference type="Gene3D" id="3.30.390.10">
    <property type="entry name" value="Enolase-like, N-terminal domain"/>
    <property type="match status" value="1"/>
</dbReference>
<dbReference type="HAMAP" id="MF_00318">
    <property type="entry name" value="Enolase"/>
    <property type="match status" value="1"/>
</dbReference>
<dbReference type="InterPro" id="IPR000941">
    <property type="entry name" value="Enolase"/>
</dbReference>
<dbReference type="InterPro" id="IPR036849">
    <property type="entry name" value="Enolase-like_C_sf"/>
</dbReference>
<dbReference type="InterPro" id="IPR029017">
    <property type="entry name" value="Enolase-like_N"/>
</dbReference>
<dbReference type="InterPro" id="IPR020810">
    <property type="entry name" value="Enolase_C"/>
</dbReference>
<dbReference type="InterPro" id="IPR020809">
    <property type="entry name" value="Enolase_CS"/>
</dbReference>
<dbReference type="InterPro" id="IPR020811">
    <property type="entry name" value="Enolase_N"/>
</dbReference>
<dbReference type="NCBIfam" id="TIGR01060">
    <property type="entry name" value="eno"/>
    <property type="match status" value="1"/>
</dbReference>
<dbReference type="PANTHER" id="PTHR11902">
    <property type="entry name" value="ENOLASE"/>
    <property type="match status" value="1"/>
</dbReference>
<dbReference type="PANTHER" id="PTHR11902:SF1">
    <property type="entry name" value="ENOLASE"/>
    <property type="match status" value="1"/>
</dbReference>
<dbReference type="Pfam" id="PF00113">
    <property type="entry name" value="Enolase_C"/>
    <property type="match status" value="1"/>
</dbReference>
<dbReference type="Pfam" id="PF03952">
    <property type="entry name" value="Enolase_N"/>
    <property type="match status" value="1"/>
</dbReference>
<dbReference type="PIRSF" id="PIRSF001400">
    <property type="entry name" value="Enolase"/>
    <property type="match status" value="1"/>
</dbReference>
<dbReference type="PRINTS" id="PR00148">
    <property type="entry name" value="ENOLASE"/>
</dbReference>
<dbReference type="SFLD" id="SFLDF00002">
    <property type="entry name" value="enolase"/>
    <property type="match status" value="1"/>
</dbReference>
<dbReference type="SFLD" id="SFLDG00178">
    <property type="entry name" value="enolase"/>
    <property type="match status" value="1"/>
</dbReference>
<dbReference type="SMART" id="SM01192">
    <property type="entry name" value="Enolase_C"/>
    <property type="match status" value="1"/>
</dbReference>
<dbReference type="SMART" id="SM01193">
    <property type="entry name" value="Enolase_N"/>
    <property type="match status" value="1"/>
</dbReference>
<dbReference type="SUPFAM" id="SSF51604">
    <property type="entry name" value="Enolase C-terminal domain-like"/>
    <property type="match status" value="1"/>
</dbReference>
<dbReference type="SUPFAM" id="SSF54826">
    <property type="entry name" value="Enolase N-terminal domain-like"/>
    <property type="match status" value="1"/>
</dbReference>
<dbReference type="PROSITE" id="PS00164">
    <property type="entry name" value="ENOLASE"/>
    <property type="match status" value="1"/>
</dbReference>
<accession>Q631M2</accession>
<evidence type="ECO:0000255" key="1">
    <source>
        <dbReference type="HAMAP-Rule" id="MF_00318"/>
    </source>
</evidence>
<sequence length="431" mass="46418">MSTIIDVYAREVLDSRGNPTVEVEVYTESGAFGRAIVPSGASTGEHEAVELRDGDKSRYLGKGVMNAVNNVNEAIAPEIVGFDVTDQAGIDRAMIELDGTPNKGKLGANAILGVSMAVAHAAADFVGLPLYRYLGGFNAKQLPTPMMNIINGGSHADNNVDFQEFMILPVGAPTFKESIRMGAEVFHALKAVLHDKGLNTAVGDEGGFAPNLGSNREALEVIIEAIEKAGYKAGENVFLGMDVASSEFYNKETGKYDLAGEGRTGLTSAEMVDFYEELCKDFPIISIEDGLDENDWDGHKLLTERLGDKVQLVGDDLFVTNTQKLAEGIEKGISNSILIKVNQIGTLTETFEAIEMAKRAGYTAVVSHRSGETEDATIADIAVATNAGQIKTGSMSRTDRIAKYNQLLRIEDELGEIAVYDGIKSFYNIKR</sequence>
<keyword id="KW-0963">Cytoplasm</keyword>
<keyword id="KW-0324">Glycolysis</keyword>
<keyword id="KW-0456">Lyase</keyword>
<keyword id="KW-0460">Magnesium</keyword>
<keyword id="KW-0479">Metal-binding</keyword>
<keyword id="KW-0964">Secreted</keyword>
<gene>
    <name evidence="1" type="primary">eno</name>
    <name type="ordered locus">BCE33L4824</name>
</gene>
<protein>
    <recommendedName>
        <fullName evidence="1">Enolase</fullName>
        <ecNumber evidence="1">4.2.1.11</ecNumber>
    </recommendedName>
    <alternativeName>
        <fullName evidence="1">2-phospho-D-glycerate hydro-lyase</fullName>
    </alternativeName>
    <alternativeName>
        <fullName evidence="1">2-phosphoglycerate dehydratase</fullName>
    </alternativeName>
</protein>
<feature type="chain" id="PRO_0000133836" description="Enolase">
    <location>
        <begin position="1"/>
        <end position="431"/>
    </location>
</feature>
<feature type="active site" description="Proton donor" evidence="1">
    <location>
        <position position="205"/>
    </location>
</feature>
<feature type="active site" description="Proton acceptor" evidence="1">
    <location>
        <position position="340"/>
    </location>
</feature>
<feature type="binding site" evidence="1">
    <location>
        <position position="163"/>
    </location>
    <ligand>
        <name>(2R)-2-phosphoglycerate</name>
        <dbReference type="ChEBI" id="CHEBI:58289"/>
    </ligand>
</feature>
<feature type="binding site" evidence="1">
    <location>
        <position position="242"/>
    </location>
    <ligand>
        <name>Mg(2+)</name>
        <dbReference type="ChEBI" id="CHEBI:18420"/>
    </ligand>
</feature>
<feature type="binding site" evidence="1">
    <location>
        <position position="288"/>
    </location>
    <ligand>
        <name>Mg(2+)</name>
        <dbReference type="ChEBI" id="CHEBI:18420"/>
    </ligand>
</feature>
<feature type="binding site" evidence="1">
    <location>
        <position position="315"/>
    </location>
    <ligand>
        <name>Mg(2+)</name>
        <dbReference type="ChEBI" id="CHEBI:18420"/>
    </ligand>
</feature>
<feature type="binding site" evidence="1">
    <location>
        <position position="340"/>
    </location>
    <ligand>
        <name>(2R)-2-phosphoglycerate</name>
        <dbReference type="ChEBI" id="CHEBI:58289"/>
    </ligand>
</feature>
<feature type="binding site" evidence="1">
    <location>
        <position position="369"/>
    </location>
    <ligand>
        <name>(2R)-2-phosphoglycerate</name>
        <dbReference type="ChEBI" id="CHEBI:58289"/>
    </ligand>
</feature>
<feature type="binding site" evidence="1">
    <location>
        <position position="370"/>
    </location>
    <ligand>
        <name>(2R)-2-phosphoglycerate</name>
        <dbReference type="ChEBI" id="CHEBI:58289"/>
    </ligand>
</feature>
<feature type="binding site" evidence="1">
    <location>
        <position position="391"/>
    </location>
    <ligand>
        <name>(2R)-2-phosphoglycerate</name>
        <dbReference type="ChEBI" id="CHEBI:58289"/>
    </ligand>
</feature>
<organism>
    <name type="scientific">Bacillus cereus (strain ZK / E33L)</name>
    <dbReference type="NCBI Taxonomy" id="288681"/>
    <lineage>
        <taxon>Bacteria</taxon>
        <taxon>Bacillati</taxon>
        <taxon>Bacillota</taxon>
        <taxon>Bacilli</taxon>
        <taxon>Bacillales</taxon>
        <taxon>Bacillaceae</taxon>
        <taxon>Bacillus</taxon>
        <taxon>Bacillus cereus group</taxon>
    </lineage>
</organism>
<proteinExistence type="inferred from homology"/>
<name>ENO_BACCZ</name>
<reference key="1">
    <citation type="journal article" date="2006" name="J. Bacteriol.">
        <title>Pathogenomic sequence analysis of Bacillus cereus and Bacillus thuringiensis isolates closely related to Bacillus anthracis.</title>
        <authorList>
            <person name="Han C.S."/>
            <person name="Xie G."/>
            <person name="Challacombe J.F."/>
            <person name="Altherr M.R."/>
            <person name="Bhotika S.S."/>
            <person name="Bruce D."/>
            <person name="Campbell C.S."/>
            <person name="Campbell M.L."/>
            <person name="Chen J."/>
            <person name="Chertkov O."/>
            <person name="Cleland C."/>
            <person name="Dimitrijevic M."/>
            <person name="Doggett N.A."/>
            <person name="Fawcett J.J."/>
            <person name="Glavina T."/>
            <person name="Goodwin L.A."/>
            <person name="Hill K.K."/>
            <person name="Hitchcock P."/>
            <person name="Jackson P.J."/>
            <person name="Keim P."/>
            <person name="Kewalramani A.R."/>
            <person name="Longmire J."/>
            <person name="Lucas S."/>
            <person name="Malfatti S."/>
            <person name="McMurry K."/>
            <person name="Meincke L.J."/>
            <person name="Misra M."/>
            <person name="Moseman B.L."/>
            <person name="Mundt M."/>
            <person name="Munk A.C."/>
            <person name="Okinaka R.T."/>
            <person name="Parson-Quintana B."/>
            <person name="Reilly L.P."/>
            <person name="Richardson P."/>
            <person name="Robinson D.L."/>
            <person name="Rubin E."/>
            <person name="Saunders E."/>
            <person name="Tapia R."/>
            <person name="Tesmer J.G."/>
            <person name="Thayer N."/>
            <person name="Thompson L.S."/>
            <person name="Tice H."/>
            <person name="Ticknor L.O."/>
            <person name="Wills P.L."/>
            <person name="Brettin T.S."/>
            <person name="Gilna P."/>
        </authorList>
    </citation>
    <scope>NUCLEOTIDE SEQUENCE [LARGE SCALE GENOMIC DNA]</scope>
    <source>
        <strain>ZK / E33L</strain>
    </source>
</reference>